<accession>Q2LYX9</accession>
<dbReference type="EMBL" id="CH379069">
    <property type="protein sequence ID" value="EAL29730.2"/>
    <property type="molecule type" value="Genomic_DNA"/>
</dbReference>
<dbReference type="SMR" id="Q2LYX9"/>
<dbReference type="FunCoup" id="Q2LYX9">
    <property type="interactions" value="234"/>
</dbReference>
<dbReference type="STRING" id="46245.Q2LYX9"/>
<dbReference type="eggNOG" id="KOG2612">
    <property type="taxonomic scope" value="Eukaryota"/>
</dbReference>
<dbReference type="HOGENOM" id="CLU_100743_0_0_1"/>
<dbReference type="InParanoid" id="Q2LYX9"/>
<dbReference type="OMA" id="RMCEMPN"/>
<dbReference type="Proteomes" id="UP000001819">
    <property type="component" value="Unplaced"/>
</dbReference>
<dbReference type="GO" id="GO:0005737">
    <property type="term" value="C:cytoplasm"/>
    <property type="evidence" value="ECO:0007669"/>
    <property type="project" value="UniProtKB-SubCell"/>
</dbReference>
<dbReference type="GO" id="GO:0071819">
    <property type="term" value="C:DUBm complex"/>
    <property type="evidence" value="ECO:0007669"/>
    <property type="project" value="UniProtKB-UniRule"/>
</dbReference>
<dbReference type="GO" id="GO:0005643">
    <property type="term" value="C:nuclear pore"/>
    <property type="evidence" value="ECO:0007669"/>
    <property type="project" value="UniProtKB-UniRule"/>
</dbReference>
<dbReference type="GO" id="GO:0005654">
    <property type="term" value="C:nucleoplasm"/>
    <property type="evidence" value="ECO:0007669"/>
    <property type="project" value="UniProtKB-SubCell"/>
</dbReference>
<dbReference type="GO" id="GO:0000124">
    <property type="term" value="C:SAGA complex"/>
    <property type="evidence" value="ECO:0000250"/>
    <property type="project" value="UniProtKB"/>
</dbReference>
<dbReference type="GO" id="GO:0003713">
    <property type="term" value="F:transcription coactivator activity"/>
    <property type="evidence" value="ECO:0007669"/>
    <property type="project" value="UniProtKB-UniRule"/>
</dbReference>
<dbReference type="GO" id="GO:0008270">
    <property type="term" value="F:zinc ion binding"/>
    <property type="evidence" value="ECO:0007669"/>
    <property type="project" value="UniProtKB-UniRule"/>
</dbReference>
<dbReference type="GO" id="GO:0006325">
    <property type="term" value="P:chromatin organization"/>
    <property type="evidence" value="ECO:0000250"/>
    <property type="project" value="UniProtKB"/>
</dbReference>
<dbReference type="GO" id="GO:0006406">
    <property type="term" value="P:mRNA export from nucleus"/>
    <property type="evidence" value="ECO:0007669"/>
    <property type="project" value="UniProtKB-UniRule"/>
</dbReference>
<dbReference type="GO" id="GO:0045893">
    <property type="term" value="P:positive regulation of DNA-templated transcription"/>
    <property type="evidence" value="ECO:0000250"/>
    <property type="project" value="UniProtKB"/>
</dbReference>
<dbReference type="GO" id="GO:0015031">
    <property type="term" value="P:protein transport"/>
    <property type="evidence" value="ECO:0007669"/>
    <property type="project" value="UniProtKB-KW"/>
</dbReference>
<dbReference type="GO" id="GO:0006357">
    <property type="term" value="P:regulation of transcription by RNA polymerase II"/>
    <property type="evidence" value="ECO:0007669"/>
    <property type="project" value="TreeGrafter"/>
</dbReference>
<dbReference type="FunFam" id="3.30.160.60:FF:000118">
    <property type="entry name" value="Ataxin-7-like protein 3"/>
    <property type="match status" value="1"/>
</dbReference>
<dbReference type="Gene3D" id="3.30.160.60">
    <property type="entry name" value="Classic Zinc Finger"/>
    <property type="match status" value="1"/>
</dbReference>
<dbReference type="HAMAP" id="MF_03047">
    <property type="entry name" value="Sgf11"/>
    <property type="match status" value="1"/>
</dbReference>
<dbReference type="InterPro" id="IPR013246">
    <property type="entry name" value="SAGA_su_Sgf11"/>
</dbReference>
<dbReference type="InterPro" id="IPR051078">
    <property type="entry name" value="SGF11"/>
</dbReference>
<dbReference type="PANTHER" id="PTHR46367">
    <property type="entry name" value="ATAXIN-7-LIKE PROTEIN 3"/>
    <property type="match status" value="1"/>
</dbReference>
<dbReference type="PANTHER" id="PTHR46367:SF1">
    <property type="entry name" value="ATAXIN-7-LIKE PROTEIN 3"/>
    <property type="match status" value="1"/>
</dbReference>
<dbReference type="Pfam" id="PF08209">
    <property type="entry name" value="Sgf11"/>
    <property type="match status" value="1"/>
</dbReference>
<sequence length="196" mass="21047">MPTSAAPVPAVAAQSPTTRKAIANNFRELTKDPKKLDEAANQLYESLLEDAVTGIFIEVHHLRKIGNLSALDGVAEESAHRICDVPNLDIFGVSTAKKAIDCTCPNCDRLVAAARFAPHLEKCMGMGRISSRIASRRLATKEGTSASSNSSYVHSGANAGGTDDEDDVDWSSDKRKKKSTQNSRNNGSKKNNGKTF</sequence>
<gene>
    <name evidence="2" type="primary">Sgf11</name>
    <name type="ORF">GA12241</name>
</gene>
<organism>
    <name type="scientific">Drosophila pseudoobscura pseudoobscura</name>
    <name type="common">Fruit fly</name>
    <dbReference type="NCBI Taxonomy" id="46245"/>
    <lineage>
        <taxon>Eukaryota</taxon>
        <taxon>Metazoa</taxon>
        <taxon>Ecdysozoa</taxon>
        <taxon>Arthropoda</taxon>
        <taxon>Hexapoda</taxon>
        <taxon>Insecta</taxon>
        <taxon>Pterygota</taxon>
        <taxon>Neoptera</taxon>
        <taxon>Endopterygota</taxon>
        <taxon>Diptera</taxon>
        <taxon>Brachycera</taxon>
        <taxon>Muscomorpha</taxon>
        <taxon>Ephydroidea</taxon>
        <taxon>Drosophilidae</taxon>
        <taxon>Drosophila</taxon>
        <taxon>Sophophora</taxon>
    </lineage>
</organism>
<comment type="function">
    <text evidence="2">Component of the transcription regulatory histone acetylation (HAT) complex SAGA, a multiprotein complex that activates transcription by remodeling chromatin and mediating histone acetylation and deubiquitination. Within the SAGA complex, participates in a subcomplex that specifically deubiquitinates histone H2B. The SAGA complex is recruited to specific gene promoters by activators, where it is required for transcription. Required for nuclear receptor-mediated transactivation. Binds independently on SAGA to promoters in an RNA-dependent manner. Binds to mRNA and is essential for total mRNA export from the nucleus. Required to counteract heterochromatin silencing. Controls the development of neuronal connectivity in visual system by being required for accurate axon targeting in the optic lobe. Required for expression of ecdysone-induced genes such as br/broad.</text>
</comment>
<comment type="subunit">
    <text evidence="2">Component of some SAGA transcription coactivator-HAT complexes, at least composed of Ada2b, not/nonstop, Pcaf/Gcn5, Sgf11 and Spt3. Within the SAGA complex, Sgf11, e(y)2, and not/nonstop form an additional subcomplex of SAGA called the DUB module (deubiquitination module). Interacts directly with not/nonstop. Interacts with the AMEX complex component xmas-2. Interacts with Cbp80; important for promoter recruitment of Sgf11 that is not associated with the DUB module.</text>
</comment>
<comment type="subcellular location">
    <subcellularLocation>
        <location evidence="2">Nucleus</location>
        <location evidence="2">Nucleoplasm</location>
    </subcellularLocation>
    <subcellularLocation>
        <location evidence="2">Cytoplasm</location>
    </subcellularLocation>
    <text evidence="2">Localizes to nuclear periphery, in contact with the nuclear pore complex (NPC).</text>
</comment>
<comment type="domain">
    <text evidence="2">The long N-terminal helix forms part of the 'assembly lobe' of the SAGA deubiquitination module.</text>
</comment>
<comment type="domain">
    <text evidence="2">The C-terminal SGF11-type zinc-finger domain together with the C-terminal catalytic domain of not/nonstop forms the 'catalytic lobe' of the SAGA deubiquitination module.</text>
</comment>
<comment type="similarity">
    <text evidence="2">Belongs to the SGF11 family.</text>
</comment>
<protein>
    <recommendedName>
        <fullName evidence="2">SAGA-associated factor 11 homolog</fullName>
    </recommendedName>
</protein>
<name>SGF11_DROPS</name>
<keyword id="KW-0010">Activator</keyword>
<keyword id="KW-0156">Chromatin regulator</keyword>
<keyword id="KW-0963">Cytoplasm</keyword>
<keyword id="KW-0479">Metal-binding</keyword>
<keyword id="KW-0509">mRNA transport</keyword>
<keyword id="KW-0539">Nucleus</keyword>
<keyword id="KW-0597">Phosphoprotein</keyword>
<keyword id="KW-0653">Protein transport</keyword>
<keyword id="KW-1185">Reference proteome</keyword>
<keyword id="KW-0804">Transcription</keyword>
<keyword id="KW-0805">Transcription regulation</keyword>
<keyword id="KW-0811">Translocation</keyword>
<keyword id="KW-0813">Transport</keyword>
<keyword id="KW-0862">Zinc</keyword>
<keyword id="KW-0863">Zinc-finger</keyword>
<proteinExistence type="inferred from homology"/>
<feature type="chain" id="PRO_0000367528" description="SAGA-associated factor 11 homolog">
    <location>
        <begin position="1"/>
        <end position="196"/>
    </location>
</feature>
<feature type="zinc finger region" description="SGF11-type" evidence="2">
    <location>
        <begin position="102"/>
        <end position="123"/>
    </location>
</feature>
<feature type="region of interest" description="Disordered" evidence="3">
    <location>
        <begin position="140"/>
        <end position="196"/>
    </location>
</feature>
<feature type="compositionally biased region" description="Polar residues" evidence="3">
    <location>
        <begin position="142"/>
        <end position="153"/>
    </location>
</feature>
<feature type="compositionally biased region" description="Low complexity" evidence="3">
    <location>
        <begin position="182"/>
        <end position="196"/>
    </location>
</feature>
<feature type="modified residue" description="Phosphoserine" evidence="1">
    <location>
        <position position="172"/>
    </location>
</feature>
<reference key="1">
    <citation type="journal article" date="2005" name="Genome Res.">
        <title>Comparative genome sequencing of Drosophila pseudoobscura: chromosomal, gene, and cis-element evolution.</title>
        <authorList>
            <person name="Richards S."/>
            <person name="Liu Y."/>
            <person name="Bettencourt B.R."/>
            <person name="Hradecky P."/>
            <person name="Letovsky S."/>
            <person name="Nielsen R."/>
            <person name="Thornton K."/>
            <person name="Hubisz M.J."/>
            <person name="Chen R."/>
            <person name="Meisel R.P."/>
            <person name="Couronne O."/>
            <person name="Hua S."/>
            <person name="Smith M.A."/>
            <person name="Zhang P."/>
            <person name="Liu J."/>
            <person name="Bussemaker H.J."/>
            <person name="van Batenburg M.F."/>
            <person name="Howells S.L."/>
            <person name="Scherer S.E."/>
            <person name="Sodergren E."/>
            <person name="Matthews B.B."/>
            <person name="Crosby M.A."/>
            <person name="Schroeder A.J."/>
            <person name="Ortiz-Barrientos D."/>
            <person name="Rives C.M."/>
            <person name="Metzker M.L."/>
            <person name="Muzny D.M."/>
            <person name="Scott G."/>
            <person name="Steffen D."/>
            <person name="Wheeler D.A."/>
            <person name="Worley K.C."/>
            <person name="Havlak P."/>
            <person name="Durbin K.J."/>
            <person name="Egan A."/>
            <person name="Gill R."/>
            <person name="Hume J."/>
            <person name="Morgan M.B."/>
            <person name="Miner G."/>
            <person name="Hamilton C."/>
            <person name="Huang Y."/>
            <person name="Waldron L."/>
            <person name="Verduzco D."/>
            <person name="Clerc-Blankenburg K.P."/>
            <person name="Dubchak I."/>
            <person name="Noor M.A.F."/>
            <person name="Anderson W."/>
            <person name="White K.P."/>
            <person name="Clark A.G."/>
            <person name="Schaeffer S.W."/>
            <person name="Gelbart W.M."/>
            <person name="Weinstock G.M."/>
            <person name="Gibbs R.A."/>
        </authorList>
    </citation>
    <scope>NUCLEOTIDE SEQUENCE [LARGE SCALE GENOMIC DNA]</scope>
    <source>
        <strain>MV2-25 / Tucson 14011-0121.94</strain>
    </source>
</reference>
<evidence type="ECO:0000250" key="1"/>
<evidence type="ECO:0000255" key="2">
    <source>
        <dbReference type="HAMAP-Rule" id="MF_03047"/>
    </source>
</evidence>
<evidence type="ECO:0000256" key="3">
    <source>
        <dbReference type="SAM" id="MobiDB-lite"/>
    </source>
</evidence>